<reference key="1">
    <citation type="submission" date="2006-08" db="EMBL/GenBank/DDBJ databases">
        <title>Complete sequence of Shewanella frigidimarina NCIMB 400.</title>
        <authorList>
            <consortium name="US DOE Joint Genome Institute"/>
            <person name="Copeland A."/>
            <person name="Lucas S."/>
            <person name="Lapidus A."/>
            <person name="Barry K."/>
            <person name="Detter J.C."/>
            <person name="Glavina del Rio T."/>
            <person name="Hammon N."/>
            <person name="Israni S."/>
            <person name="Dalin E."/>
            <person name="Tice H."/>
            <person name="Pitluck S."/>
            <person name="Fredrickson J.K."/>
            <person name="Kolker E."/>
            <person name="McCuel L.A."/>
            <person name="DiChristina T."/>
            <person name="Nealson K.H."/>
            <person name="Newman D."/>
            <person name="Tiedje J.M."/>
            <person name="Zhou J."/>
            <person name="Romine M.F."/>
            <person name="Culley D.E."/>
            <person name="Serres M."/>
            <person name="Chertkov O."/>
            <person name="Brettin T."/>
            <person name="Bruce D."/>
            <person name="Han C."/>
            <person name="Tapia R."/>
            <person name="Gilna P."/>
            <person name="Schmutz J."/>
            <person name="Larimer F."/>
            <person name="Land M."/>
            <person name="Hauser L."/>
            <person name="Kyrpides N."/>
            <person name="Mikhailova N."/>
            <person name="Richardson P."/>
        </authorList>
    </citation>
    <scope>NUCLEOTIDE SEQUENCE [LARGE SCALE GENOMIC DNA]</scope>
    <source>
        <strain>NCIMB 400</strain>
    </source>
</reference>
<gene>
    <name evidence="1" type="primary">flgH</name>
    <name type="ordered locus">Sfri_1167</name>
</gene>
<feature type="signal peptide" evidence="1">
    <location>
        <begin position="1"/>
        <end position="15"/>
    </location>
</feature>
<feature type="chain" id="PRO_1000050099" description="Flagellar L-ring protein">
    <location>
        <begin position="16"/>
        <end position="224"/>
    </location>
</feature>
<feature type="lipid moiety-binding region" description="N-palmitoyl cysteine" evidence="1">
    <location>
        <position position="16"/>
    </location>
</feature>
<feature type="lipid moiety-binding region" description="S-diacylglycerol cysteine" evidence="1">
    <location>
        <position position="16"/>
    </location>
</feature>
<proteinExistence type="inferred from homology"/>
<sequence length="224" mass="24174">MIKYIALASVVLLVGCSSTAKKPIADDPFYAPVYPDTVPTQVAATGSIYLDSQASSLYSDIRAHRVGDIITVTLKESTQASKSANNEIKKGSDLSVEPVYAGGKNISISGVPIDLGYSDSMNTKRESDADQSNSLDGSISANIIQVLSNGNLVIRGEKWISINNGDEFIRVTGMIRSEDINPDNTIDSTRVANARIQYSGTGTFADSQKVGWLSSFFMSDWWPF</sequence>
<accession>Q085P5</accession>
<comment type="function">
    <text evidence="1">Assembles around the rod to form the L-ring and probably protects the motor/basal body from shearing forces during rotation.</text>
</comment>
<comment type="subunit">
    <text evidence="1">The basal body constitutes a major portion of the flagellar organelle and consists of four rings (L,P,S, and M) mounted on a central rod.</text>
</comment>
<comment type="subcellular location">
    <subcellularLocation>
        <location evidence="1">Cell outer membrane</location>
        <topology evidence="1">Lipid-anchor</topology>
    </subcellularLocation>
    <subcellularLocation>
        <location evidence="1">Bacterial flagellum basal body</location>
    </subcellularLocation>
</comment>
<comment type="similarity">
    <text evidence="1">Belongs to the FlgH family.</text>
</comment>
<protein>
    <recommendedName>
        <fullName evidence="1">Flagellar L-ring protein</fullName>
    </recommendedName>
    <alternativeName>
        <fullName evidence="1">Basal body L-ring protein</fullName>
    </alternativeName>
</protein>
<organism>
    <name type="scientific">Shewanella frigidimarina (strain NCIMB 400)</name>
    <dbReference type="NCBI Taxonomy" id="318167"/>
    <lineage>
        <taxon>Bacteria</taxon>
        <taxon>Pseudomonadati</taxon>
        <taxon>Pseudomonadota</taxon>
        <taxon>Gammaproteobacteria</taxon>
        <taxon>Alteromonadales</taxon>
        <taxon>Shewanellaceae</taxon>
        <taxon>Shewanella</taxon>
    </lineage>
</organism>
<name>FLGH_SHEFN</name>
<evidence type="ECO:0000255" key="1">
    <source>
        <dbReference type="HAMAP-Rule" id="MF_00415"/>
    </source>
</evidence>
<dbReference type="EMBL" id="CP000447">
    <property type="protein sequence ID" value="ABI71020.1"/>
    <property type="molecule type" value="Genomic_DNA"/>
</dbReference>
<dbReference type="RefSeq" id="WP_011636641.1">
    <property type="nucleotide sequence ID" value="NC_008345.1"/>
</dbReference>
<dbReference type="SMR" id="Q085P5"/>
<dbReference type="STRING" id="318167.Sfri_1167"/>
<dbReference type="DNASU" id="4278435"/>
<dbReference type="KEGG" id="sfr:Sfri_1167"/>
<dbReference type="eggNOG" id="COG2063">
    <property type="taxonomic scope" value="Bacteria"/>
</dbReference>
<dbReference type="HOGENOM" id="CLU_069313_0_2_6"/>
<dbReference type="OrthoDB" id="9789463at2"/>
<dbReference type="Proteomes" id="UP000000684">
    <property type="component" value="Chromosome"/>
</dbReference>
<dbReference type="GO" id="GO:0009427">
    <property type="term" value="C:bacterial-type flagellum basal body, distal rod, L ring"/>
    <property type="evidence" value="ECO:0007669"/>
    <property type="project" value="InterPro"/>
</dbReference>
<dbReference type="GO" id="GO:0009279">
    <property type="term" value="C:cell outer membrane"/>
    <property type="evidence" value="ECO:0007669"/>
    <property type="project" value="UniProtKB-SubCell"/>
</dbReference>
<dbReference type="GO" id="GO:0003774">
    <property type="term" value="F:cytoskeletal motor activity"/>
    <property type="evidence" value="ECO:0007669"/>
    <property type="project" value="InterPro"/>
</dbReference>
<dbReference type="GO" id="GO:0071973">
    <property type="term" value="P:bacterial-type flagellum-dependent cell motility"/>
    <property type="evidence" value="ECO:0007669"/>
    <property type="project" value="InterPro"/>
</dbReference>
<dbReference type="HAMAP" id="MF_00415">
    <property type="entry name" value="FlgH"/>
    <property type="match status" value="1"/>
</dbReference>
<dbReference type="InterPro" id="IPR000527">
    <property type="entry name" value="Flag_Lring"/>
</dbReference>
<dbReference type="NCBIfam" id="NF001304">
    <property type="entry name" value="PRK00249.1-4"/>
    <property type="match status" value="1"/>
</dbReference>
<dbReference type="NCBIfam" id="NF009338">
    <property type="entry name" value="PRK12698.1"/>
    <property type="match status" value="1"/>
</dbReference>
<dbReference type="PANTHER" id="PTHR34933">
    <property type="entry name" value="FLAGELLAR L-RING PROTEIN"/>
    <property type="match status" value="1"/>
</dbReference>
<dbReference type="PANTHER" id="PTHR34933:SF1">
    <property type="entry name" value="FLAGELLAR L-RING PROTEIN"/>
    <property type="match status" value="1"/>
</dbReference>
<dbReference type="Pfam" id="PF02107">
    <property type="entry name" value="FlgH"/>
    <property type="match status" value="1"/>
</dbReference>
<dbReference type="PRINTS" id="PR01008">
    <property type="entry name" value="FLGLRINGFLGH"/>
</dbReference>
<dbReference type="PROSITE" id="PS51257">
    <property type="entry name" value="PROKAR_LIPOPROTEIN"/>
    <property type="match status" value="1"/>
</dbReference>
<keyword id="KW-0975">Bacterial flagellum</keyword>
<keyword id="KW-0998">Cell outer membrane</keyword>
<keyword id="KW-0449">Lipoprotein</keyword>
<keyword id="KW-0472">Membrane</keyword>
<keyword id="KW-0564">Palmitate</keyword>
<keyword id="KW-1185">Reference proteome</keyword>
<keyword id="KW-0732">Signal</keyword>